<organism>
    <name type="scientific">Azotobacter vinelandii (strain DJ / ATCC BAA-1303)</name>
    <dbReference type="NCBI Taxonomy" id="322710"/>
    <lineage>
        <taxon>Bacteria</taxon>
        <taxon>Pseudomonadati</taxon>
        <taxon>Pseudomonadota</taxon>
        <taxon>Gammaproteobacteria</taxon>
        <taxon>Pseudomonadales</taxon>
        <taxon>Pseudomonadaceae</taxon>
        <taxon>Azotobacter</taxon>
    </lineage>
</organism>
<feature type="chain" id="PRO_1000216147" description="Fructose-1,6-bisphosphatase class 1">
    <location>
        <begin position="1"/>
        <end position="337"/>
    </location>
</feature>
<feature type="binding site" evidence="1">
    <location>
        <position position="90"/>
    </location>
    <ligand>
        <name>Mg(2+)</name>
        <dbReference type="ChEBI" id="CHEBI:18420"/>
        <label>1</label>
    </ligand>
</feature>
<feature type="binding site" evidence="1">
    <location>
        <position position="112"/>
    </location>
    <ligand>
        <name>Mg(2+)</name>
        <dbReference type="ChEBI" id="CHEBI:18420"/>
        <label>1</label>
    </ligand>
</feature>
<feature type="binding site" evidence="1">
    <location>
        <position position="112"/>
    </location>
    <ligand>
        <name>Mg(2+)</name>
        <dbReference type="ChEBI" id="CHEBI:18420"/>
        <label>2</label>
    </ligand>
</feature>
<feature type="binding site" evidence="1">
    <location>
        <position position="114"/>
    </location>
    <ligand>
        <name>Mg(2+)</name>
        <dbReference type="ChEBI" id="CHEBI:18420"/>
        <label>1</label>
    </ligand>
</feature>
<feature type="binding site" evidence="1">
    <location>
        <begin position="115"/>
        <end position="118"/>
    </location>
    <ligand>
        <name>substrate</name>
    </ligand>
</feature>
<feature type="binding site" evidence="1">
    <location>
        <position position="115"/>
    </location>
    <ligand>
        <name>Mg(2+)</name>
        <dbReference type="ChEBI" id="CHEBI:18420"/>
        <label>2</label>
    </ligand>
</feature>
<feature type="binding site" evidence="1">
    <location>
        <position position="211"/>
    </location>
    <ligand>
        <name>substrate</name>
    </ligand>
</feature>
<feature type="binding site" evidence="1">
    <location>
        <position position="277"/>
    </location>
    <ligand>
        <name>substrate</name>
    </ligand>
</feature>
<feature type="binding site" evidence="1">
    <location>
        <position position="283"/>
    </location>
    <ligand>
        <name>Mg(2+)</name>
        <dbReference type="ChEBI" id="CHEBI:18420"/>
        <label>2</label>
    </ligand>
</feature>
<evidence type="ECO:0000255" key="1">
    <source>
        <dbReference type="HAMAP-Rule" id="MF_01855"/>
    </source>
</evidence>
<protein>
    <recommendedName>
        <fullName evidence="1">Fructose-1,6-bisphosphatase class 1</fullName>
        <shortName evidence="1">FBPase class 1</shortName>
        <ecNumber evidence="1">3.1.3.11</ecNumber>
    </recommendedName>
    <alternativeName>
        <fullName evidence="1">D-fructose-1,6-bisphosphate 1-phosphohydrolase class 1</fullName>
    </alternativeName>
</protein>
<comment type="catalytic activity">
    <reaction evidence="1">
        <text>beta-D-fructose 1,6-bisphosphate + H2O = beta-D-fructose 6-phosphate + phosphate</text>
        <dbReference type="Rhea" id="RHEA:11064"/>
        <dbReference type="ChEBI" id="CHEBI:15377"/>
        <dbReference type="ChEBI" id="CHEBI:32966"/>
        <dbReference type="ChEBI" id="CHEBI:43474"/>
        <dbReference type="ChEBI" id="CHEBI:57634"/>
        <dbReference type="EC" id="3.1.3.11"/>
    </reaction>
</comment>
<comment type="cofactor">
    <cofactor evidence="1">
        <name>Mg(2+)</name>
        <dbReference type="ChEBI" id="CHEBI:18420"/>
    </cofactor>
    <text evidence="1">Binds 2 magnesium ions per subunit.</text>
</comment>
<comment type="pathway">
    <text evidence="1">Carbohydrate biosynthesis; gluconeogenesis.</text>
</comment>
<comment type="subunit">
    <text evidence="1">Homotetramer.</text>
</comment>
<comment type="subcellular location">
    <subcellularLocation>
        <location evidence="1">Cytoplasm</location>
    </subcellularLocation>
</comment>
<comment type="similarity">
    <text evidence="1">Belongs to the FBPase class 1 family.</text>
</comment>
<proteinExistence type="inferred from homology"/>
<sequence length="337" mass="37196">MSRVTLSRYLIEQTRSHNTPADLRFLIEVVARACKEISHAVSKGALGGVLGSMGTENVQGEVQKKLDVMSNEILLEANEWGGHLAGMASEEMDSAYQIPGKYPKGAYLLVFDPLDGSSNIDVNVSVGTIFSVLRCPDQYLTQNDSLNEQAFLQPGTQQVAAGYAIYGPQTMLMLTLGNGVKGFTLDRELGSFVLTHDNLCVPETTAEFAINMSNQRHWEPPVKRYVDELLAGKTGPLDKDYNMRWIASMVADVHRILTRGGIFMYPRDAREPSKPGKLRLMYEANPMSFIIEQAGGAATNGTQRILDIQPESLHQRVAVFLGSKAEVERITDYHLEG</sequence>
<keyword id="KW-0119">Carbohydrate metabolism</keyword>
<keyword id="KW-0963">Cytoplasm</keyword>
<keyword id="KW-0378">Hydrolase</keyword>
<keyword id="KW-0460">Magnesium</keyword>
<keyword id="KW-0479">Metal-binding</keyword>
<name>F16PA_AZOVD</name>
<accession>C1DHU3</accession>
<reference key="1">
    <citation type="journal article" date="2009" name="J. Bacteriol.">
        <title>Genome sequence of Azotobacter vinelandii, an obligate aerobe specialized to support diverse anaerobic metabolic processes.</title>
        <authorList>
            <person name="Setubal J.C."/>
            <person name="Dos Santos P."/>
            <person name="Goldman B.S."/>
            <person name="Ertesvaag H."/>
            <person name="Espin G."/>
            <person name="Rubio L.M."/>
            <person name="Valla S."/>
            <person name="Almeida N.F."/>
            <person name="Balasubramanian D."/>
            <person name="Cromes L."/>
            <person name="Curatti L."/>
            <person name="Du Z."/>
            <person name="Godsy E."/>
            <person name="Goodner B."/>
            <person name="Hellner-Burris K."/>
            <person name="Hernandez J.A."/>
            <person name="Houmiel K."/>
            <person name="Imperial J."/>
            <person name="Kennedy C."/>
            <person name="Larson T.J."/>
            <person name="Latreille P."/>
            <person name="Ligon L.S."/>
            <person name="Lu J."/>
            <person name="Maerk M."/>
            <person name="Miller N.M."/>
            <person name="Norton S."/>
            <person name="O'Carroll I.P."/>
            <person name="Paulsen I."/>
            <person name="Raulfs E.C."/>
            <person name="Roemer R."/>
            <person name="Rosser J."/>
            <person name="Segura D."/>
            <person name="Slater S."/>
            <person name="Stricklin S.L."/>
            <person name="Studholme D.J."/>
            <person name="Sun J."/>
            <person name="Viana C.J."/>
            <person name="Wallin E."/>
            <person name="Wang B."/>
            <person name="Wheeler C."/>
            <person name="Zhu H."/>
            <person name="Dean D.R."/>
            <person name="Dixon R."/>
            <person name="Wood D."/>
        </authorList>
    </citation>
    <scope>NUCLEOTIDE SEQUENCE [LARGE SCALE GENOMIC DNA]</scope>
    <source>
        <strain>DJ / ATCC BAA-1303</strain>
    </source>
</reference>
<gene>
    <name evidence="1" type="primary">fbp</name>
    <name type="ordered locus">Avin_45640</name>
</gene>
<dbReference type="EC" id="3.1.3.11" evidence="1"/>
<dbReference type="EMBL" id="CP001157">
    <property type="protein sequence ID" value="ACO80676.1"/>
    <property type="molecule type" value="Genomic_DNA"/>
</dbReference>
<dbReference type="RefSeq" id="WP_012703043.1">
    <property type="nucleotide sequence ID" value="NC_012560.1"/>
</dbReference>
<dbReference type="SMR" id="C1DHU3"/>
<dbReference type="STRING" id="322710.Avin_45640"/>
<dbReference type="EnsemblBacteria" id="ACO80676">
    <property type="protein sequence ID" value="ACO80676"/>
    <property type="gene ID" value="Avin_45640"/>
</dbReference>
<dbReference type="GeneID" id="88187447"/>
<dbReference type="KEGG" id="avn:Avin_45640"/>
<dbReference type="eggNOG" id="COG0158">
    <property type="taxonomic scope" value="Bacteria"/>
</dbReference>
<dbReference type="HOGENOM" id="CLU_039977_0_0_6"/>
<dbReference type="OrthoDB" id="9806756at2"/>
<dbReference type="UniPathway" id="UPA00138"/>
<dbReference type="Proteomes" id="UP000002424">
    <property type="component" value="Chromosome"/>
</dbReference>
<dbReference type="GO" id="GO:0005829">
    <property type="term" value="C:cytosol"/>
    <property type="evidence" value="ECO:0007669"/>
    <property type="project" value="TreeGrafter"/>
</dbReference>
<dbReference type="GO" id="GO:0042132">
    <property type="term" value="F:fructose 1,6-bisphosphate 1-phosphatase activity"/>
    <property type="evidence" value="ECO:0007669"/>
    <property type="project" value="UniProtKB-UniRule"/>
</dbReference>
<dbReference type="GO" id="GO:0000287">
    <property type="term" value="F:magnesium ion binding"/>
    <property type="evidence" value="ECO:0007669"/>
    <property type="project" value="UniProtKB-UniRule"/>
</dbReference>
<dbReference type="GO" id="GO:0030388">
    <property type="term" value="P:fructose 1,6-bisphosphate metabolic process"/>
    <property type="evidence" value="ECO:0007669"/>
    <property type="project" value="TreeGrafter"/>
</dbReference>
<dbReference type="GO" id="GO:0006002">
    <property type="term" value="P:fructose 6-phosphate metabolic process"/>
    <property type="evidence" value="ECO:0007669"/>
    <property type="project" value="TreeGrafter"/>
</dbReference>
<dbReference type="GO" id="GO:0006000">
    <property type="term" value="P:fructose metabolic process"/>
    <property type="evidence" value="ECO:0007669"/>
    <property type="project" value="TreeGrafter"/>
</dbReference>
<dbReference type="GO" id="GO:0006094">
    <property type="term" value="P:gluconeogenesis"/>
    <property type="evidence" value="ECO:0007669"/>
    <property type="project" value="UniProtKB-UniRule"/>
</dbReference>
<dbReference type="GO" id="GO:0005986">
    <property type="term" value="P:sucrose biosynthetic process"/>
    <property type="evidence" value="ECO:0007669"/>
    <property type="project" value="TreeGrafter"/>
</dbReference>
<dbReference type="CDD" id="cd00354">
    <property type="entry name" value="FBPase"/>
    <property type="match status" value="1"/>
</dbReference>
<dbReference type="FunFam" id="3.30.540.10:FF:000006">
    <property type="entry name" value="Fructose-1,6-bisphosphatase class 1"/>
    <property type="match status" value="1"/>
</dbReference>
<dbReference type="FunFam" id="3.40.190.80:FF:000011">
    <property type="entry name" value="Fructose-1,6-bisphosphatase class 1"/>
    <property type="match status" value="1"/>
</dbReference>
<dbReference type="Gene3D" id="3.40.190.80">
    <property type="match status" value="1"/>
</dbReference>
<dbReference type="Gene3D" id="3.30.540.10">
    <property type="entry name" value="Fructose-1,6-Bisphosphatase, subunit A, domain 1"/>
    <property type="match status" value="1"/>
</dbReference>
<dbReference type="HAMAP" id="MF_01855">
    <property type="entry name" value="FBPase_class1"/>
    <property type="match status" value="1"/>
</dbReference>
<dbReference type="InterPro" id="IPR044015">
    <property type="entry name" value="FBPase_C_dom"/>
</dbReference>
<dbReference type="InterPro" id="IPR000146">
    <property type="entry name" value="FBPase_class-1"/>
</dbReference>
<dbReference type="InterPro" id="IPR033391">
    <property type="entry name" value="FBPase_N"/>
</dbReference>
<dbReference type="InterPro" id="IPR028343">
    <property type="entry name" value="FBPtase"/>
</dbReference>
<dbReference type="NCBIfam" id="NF006778">
    <property type="entry name" value="PRK09293.1-1"/>
    <property type="match status" value="1"/>
</dbReference>
<dbReference type="NCBIfam" id="NF006779">
    <property type="entry name" value="PRK09293.1-3"/>
    <property type="match status" value="1"/>
</dbReference>
<dbReference type="NCBIfam" id="NF006780">
    <property type="entry name" value="PRK09293.1-4"/>
    <property type="match status" value="1"/>
</dbReference>
<dbReference type="PANTHER" id="PTHR11556">
    <property type="entry name" value="FRUCTOSE-1,6-BISPHOSPHATASE-RELATED"/>
    <property type="match status" value="1"/>
</dbReference>
<dbReference type="PANTHER" id="PTHR11556:SF35">
    <property type="entry name" value="SEDOHEPTULOSE-1,7-BISPHOSPHATASE, CHLOROPLASTIC"/>
    <property type="match status" value="1"/>
</dbReference>
<dbReference type="Pfam" id="PF00316">
    <property type="entry name" value="FBPase"/>
    <property type="match status" value="1"/>
</dbReference>
<dbReference type="Pfam" id="PF18913">
    <property type="entry name" value="FBPase_C"/>
    <property type="match status" value="1"/>
</dbReference>
<dbReference type="PIRSF" id="PIRSF500210">
    <property type="entry name" value="FBPtase"/>
    <property type="match status" value="1"/>
</dbReference>
<dbReference type="PIRSF" id="PIRSF000904">
    <property type="entry name" value="FBPtase_SBPase"/>
    <property type="match status" value="1"/>
</dbReference>
<dbReference type="PRINTS" id="PR00115">
    <property type="entry name" value="F16BPHPHTASE"/>
</dbReference>
<dbReference type="SUPFAM" id="SSF56655">
    <property type="entry name" value="Carbohydrate phosphatase"/>
    <property type="match status" value="1"/>
</dbReference>